<dbReference type="EMBL" id="CP001661">
    <property type="protein sequence ID" value="ACT17286.1"/>
    <property type="molecule type" value="Genomic_DNA"/>
</dbReference>
<dbReference type="SMR" id="C6E3M1"/>
<dbReference type="STRING" id="443144.GM21_1225"/>
<dbReference type="KEGG" id="gem:GM21_1225"/>
<dbReference type="eggNOG" id="COG1327">
    <property type="taxonomic scope" value="Bacteria"/>
</dbReference>
<dbReference type="HOGENOM" id="CLU_108412_0_0_7"/>
<dbReference type="OrthoDB" id="9807461at2"/>
<dbReference type="GO" id="GO:0005524">
    <property type="term" value="F:ATP binding"/>
    <property type="evidence" value="ECO:0007669"/>
    <property type="project" value="UniProtKB-KW"/>
</dbReference>
<dbReference type="GO" id="GO:0003677">
    <property type="term" value="F:DNA binding"/>
    <property type="evidence" value="ECO:0007669"/>
    <property type="project" value="UniProtKB-KW"/>
</dbReference>
<dbReference type="GO" id="GO:0008270">
    <property type="term" value="F:zinc ion binding"/>
    <property type="evidence" value="ECO:0007669"/>
    <property type="project" value="UniProtKB-UniRule"/>
</dbReference>
<dbReference type="GO" id="GO:0045892">
    <property type="term" value="P:negative regulation of DNA-templated transcription"/>
    <property type="evidence" value="ECO:0007669"/>
    <property type="project" value="UniProtKB-UniRule"/>
</dbReference>
<dbReference type="HAMAP" id="MF_00440">
    <property type="entry name" value="NrdR"/>
    <property type="match status" value="1"/>
</dbReference>
<dbReference type="InterPro" id="IPR005144">
    <property type="entry name" value="ATP-cone_dom"/>
</dbReference>
<dbReference type="InterPro" id="IPR055173">
    <property type="entry name" value="NrdR-like_N"/>
</dbReference>
<dbReference type="InterPro" id="IPR003796">
    <property type="entry name" value="RNR_NrdR-like"/>
</dbReference>
<dbReference type="NCBIfam" id="TIGR00244">
    <property type="entry name" value="transcriptional regulator NrdR"/>
    <property type="match status" value="1"/>
</dbReference>
<dbReference type="PANTHER" id="PTHR30455">
    <property type="entry name" value="TRANSCRIPTIONAL REPRESSOR NRDR"/>
    <property type="match status" value="1"/>
</dbReference>
<dbReference type="PANTHER" id="PTHR30455:SF2">
    <property type="entry name" value="TRANSCRIPTIONAL REPRESSOR NRDR"/>
    <property type="match status" value="1"/>
</dbReference>
<dbReference type="Pfam" id="PF03477">
    <property type="entry name" value="ATP-cone"/>
    <property type="match status" value="1"/>
</dbReference>
<dbReference type="Pfam" id="PF22811">
    <property type="entry name" value="Zn_ribbon_NrdR"/>
    <property type="match status" value="1"/>
</dbReference>
<dbReference type="PROSITE" id="PS51161">
    <property type="entry name" value="ATP_CONE"/>
    <property type="match status" value="1"/>
</dbReference>
<keyword id="KW-0067">ATP-binding</keyword>
<keyword id="KW-0238">DNA-binding</keyword>
<keyword id="KW-0479">Metal-binding</keyword>
<keyword id="KW-0547">Nucleotide-binding</keyword>
<keyword id="KW-0678">Repressor</keyword>
<keyword id="KW-0804">Transcription</keyword>
<keyword id="KW-0805">Transcription regulation</keyword>
<keyword id="KW-0862">Zinc</keyword>
<keyword id="KW-0863">Zinc-finger</keyword>
<gene>
    <name evidence="1" type="primary">nrdR</name>
    <name type="ordered locus">GM21_1225</name>
</gene>
<accession>C6E3M1</accession>
<name>NRDR_GEOSM</name>
<comment type="function">
    <text evidence="1">Negatively regulates transcription of bacterial ribonucleotide reductase nrd genes and operons by binding to NrdR-boxes.</text>
</comment>
<comment type="cofactor">
    <cofactor evidence="1">
        <name>Zn(2+)</name>
        <dbReference type="ChEBI" id="CHEBI:29105"/>
    </cofactor>
    <text evidence="1">Binds 1 zinc ion.</text>
</comment>
<comment type="similarity">
    <text evidence="1">Belongs to the NrdR family.</text>
</comment>
<protein>
    <recommendedName>
        <fullName evidence="1">Transcriptional repressor NrdR</fullName>
    </recommendedName>
</protein>
<evidence type="ECO:0000255" key="1">
    <source>
        <dbReference type="HAMAP-Rule" id="MF_00440"/>
    </source>
</evidence>
<sequence>MKCPFCNFSDSKVVDSRPDKGGAAIRRRRECESCGKRFTTHERVEEVLPLVTKRDGRREPFERMKLVNGIQKACEKRPVSVETIEKMVDRLETRLQESGEREIPTTTLGEWIMSELHGVDQVAYVRFASVYRSFKDINEFMEELQDLLKK</sequence>
<feature type="chain" id="PRO_1000206118" description="Transcriptional repressor NrdR">
    <location>
        <begin position="1"/>
        <end position="150"/>
    </location>
</feature>
<feature type="domain" description="ATP-cone" evidence="1">
    <location>
        <begin position="49"/>
        <end position="139"/>
    </location>
</feature>
<feature type="zinc finger region" evidence="1">
    <location>
        <begin position="3"/>
        <end position="34"/>
    </location>
</feature>
<organism>
    <name type="scientific">Geobacter sp. (strain M21)</name>
    <dbReference type="NCBI Taxonomy" id="443144"/>
    <lineage>
        <taxon>Bacteria</taxon>
        <taxon>Pseudomonadati</taxon>
        <taxon>Thermodesulfobacteriota</taxon>
        <taxon>Desulfuromonadia</taxon>
        <taxon>Geobacterales</taxon>
        <taxon>Geobacteraceae</taxon>
        <taxon>Geobacter</taxon>
    </lineage>
</organism>
<reference key="1">
    <citation type="submission" date="2009-07" db="EMBL/GenBank/DDBJ databases">
        <title>Complete sequence of Geobacter sp. M21.</title>
        <authorList>
            <consortium name="US DOE Joint Genome Institute"/>
            <person name="Lucas S."/>
            <person name="Copeland A."/>
            <person name="Lapidus A."/>
            <person name="Glavina del Rio T."/>
            <person name="Dalin E."/>
            <person name="Tice H."/>
            <person name="Bruce D."/>
            <person name="Goodwin L."/>
            <person name="Pitluck S."/>
            <person name="Saunders E."/>
            <person name="Brettin T."/>
            <person name="Detter J.C."/>
            <person name="Han C."/>
            <person name="Larimer F."/>
            <person name="Land M."/>
            <person name="Hauser L."/>
            <person name="Kyrpides N."/>
            <person name="Ovchinnikova G."/>
            <person name="Lovley D."/>
        </authorList>
    </citation>
    <scope>NUCLEOTIDE SEQUENCE [LARGE SCALE GENOMIC DNA]</scope>
    <source>
        <strain>M21</strain>
    </source>
</reference>
<proteinExistence type="inferred from homology"/>